<accession>Q8FFD5</accession>
<comment type="function">
    <text evidence="1">The phosphoenolpyruvate-dependent sugar phosphotransferase system (PTS), a major carbohydrate active -transport system, catalyzes the phosphorylation of incoming sugar substrates concomitant with their translocation across the cell membrane.</text>
</comment>
<comment type="subcellular location">
    <subcellularLocation>
        <location evidence="3">Cell inner membrane</location>
        <topology evidence="3">Multi-pass membrane protein</topology>
    </subcellularLocation>
</comment>
<comment type="domain">
    <text>The EIIC domain forms the PTS system translocation channel and contains the specific substrate-binding site.</text>
</comment>
<evidence type="ECO:0000250" key="1"/>
<evidence type="ECO:0000255" key="2"/>
<evidence type="ECO:0000255" key="3">
    <source>
        <dbReference type="PROSITE-ProRule" id="PRU00427"/>
    </source>
</evidence>
<feature type="chain" id="PRO_0000186705" description="Fructose-like permease IIC component">
    <location>
        <begin position="1"/>
        <end position="415"/>
    </location>
</feature>
<feature type="topological domain" description="Cytoplasmic" evidence="2">
    <location>
        <begin position="1"/>
        <end position="46"/>
    </location>
</feature>
<feature type="transmembrane region" description="Helical" evidence="3">
    <location>
        <begin position="47"/>
        <end position="67"/>
    </location>
</feature>
<feature type="topological domain" description="Periplasmic" evidence="2">
    <location>
        <begin position="68"/>
        <end position="101"/>
    </location>
</feature>
<feature type="transmembrane region" description="Helical" evidence="3">
    <location>
        <begin position="102"/>
        <end position="122"/>
    </location>
</feature>
<feature type="topological domain" description="Cytoplasmic" evidence="2">
    <location>
        <begin position="123"/>
        <end position="126"/>
    </location>
</feature>
<feature type="transmembrane region" description="Helical" evidence="3">
    <location>
        <begin position="127"/>
        <end position="147"/>
    </location>
</feature>
<feature type="topological domain" description="Periplasmic" evidence="2">
    <location>
        <begin position="148"/>
        <end position="157"/>
    </location>
</feature>
<feature type="transmembrane region" description="Helical" evidence="3">
    <location>
        <begin position="158"/>
        <end position="178"/>
    </location>
</feature>
<feature type="topological domain" description="Cytoplasmic" evidence="2">
    <location>
        <begin position="179"/>
        <end position="197"/>
    </location>
</feature>
<feature type="transmembrane region" description="Helical" evidence="3">
    <location>
        <begin position="198"/>
        <end position="218"/>
    </location>
</feature>
<feature type="topological domain" description="Periplasmic" evidence="2">
    <location>
        <begin position="219"/>
        <end position="237"/>
    </location>
</feature>
<feature type="transmembrane region" description="Helical" evidence="3">
    <location>
        <begin position="238"/>
        <end position="258"/>
    </location>
</feature>
<feature type="topological domain" description="Cytoplasmic" evidence="2">
    <location>
        <begin position="259"/>
        <end position="276"/>
    </location>
</feature>
<feature type="transmembrane region" description="Helical" evidence="3">
    <location>
        <begin position="277"/>
        <end position="297"/>
    </location>
</feature>
<feature type="topological domain" description="Periplasmic" evidence="2">
    <location>
        <begin position="298"/>
        <end position="318"/>
    </location>
</feature>
<feature type="transmembrane region" description="Helical" evidence="3">
    <location>
        <begin position="319"/>
        <end position="339"/>
    </location>
</feature>
<feature type="topological domain" description="Cytoplasmic" evidence="2">
    <location>
        <begin position="340"/>
        <end position="341"/>
    </location>
</feature>
<feature type="transmembrane region" description="Helical" evidence="3">
    <location>
        <begin position="342"/>
        <end position="362"/>
    </location>
</feature>
<feature type="topological domain" description="Periplasmic" evidence="2">
    <location>
        <begin position="363"/>
        <end position="378"/>
    </location>
</feature>
<feature type="transmembrane region" description="Helical" evidence="3">
    <location>
        <begin position="379"/>
        <end position="399"/>
    </location>
</feature>
<feature type="topological domain" description="Cytoplasmic" evidence="2">
    <location>
        <begin position="400"/>
        <end position="415"/>
    </location>
</feature>
<feature type="domain" description="PTS EIIC type-2" evidence="3">
    <location>
        <begin position="35"/>
        <end position="415"/>
    </location>
</feature>
<organism>
    <name type="scientific">Escherichia coli O6:H1 (strain CFT073 / ATCC 700928 / UPEC)</name>
    <dbReference type="NCBI Taxonomy" id="199310"/>
    <lineage>
        <taxon>Bacteria</taxon>
        <taxon>Pseudomonadati</taxon>
        <taxon>Pseudomonadota</taxon>
        <taxon>Gammaproteobacteria</taxon>
        <taxon>Enterobacterales</taxon>
        <taxon>Enterobacteriaceae</taxon>
        <taxon>Escherichia</taxon>
    </lineage>
</organism>
<proteinExistence type="inferred from homology"/>
<sequence length="415" mass="44006">MAIKKRSATVVHGASGAAAAVKNPQASKSSFWGELPQHVMSGISRMVPTLIMGGVILAFSQLIAYSWLKIPADIGIMDALNSGKFSGFDLSLLKFAWLSQSFGGVLFGFAIPMFAAFVANSIGGKLAFPAGFIGGLMSTQPTQLLNFDPSTMQWATSSPVPSTFIGALIISIVAGYLVKWMNQKIQLPDFLLAFKTTFLLPILSAIFVMLAMYYVITPFGGWINGGIRTVLTAAGEKGALMYAMGIAAATAIDLGGPINKAAGFVAFSFTTDHVLPVTARSIAIVIPPIGLGLATIIDRRLTGKRLFNAQLYPQGKTAMFLAFMGISEGAIPFALESPITAIPSYMVGAIVGSTAAVWLGAVQWFPESAIWAWPLVTNLGVYMAGIALGAIITALMVVFLRLMMFRKGKLLIESL</sequence>
<protein>
    <recommendedName>
        <fullName>Fructose-like permease IIC component</fullName>
    </recommendedName>
    <alternativeName>
        <fullName>PTS system fructose-like EIIC component</fullName>
    </alternativeName>
</protein>
<reference key="1">
    <citation type="journal article" date="2002" name="Proc. Natl. Acad. Sci. U.S.A.">
        <title>Extensive mosaic structure revealed by the complete genome sequence of uropathogenic Escherichia coli.</title>
        <authorList>
            <person name="Welch R.A."/>
            <person name="Burland V."/>
            <person name="Plunkett G. III"/>
            <person name="Redford P."/>
            <person name="Roesch P."/>
            <person name="Rasko D."/>
            <person name="Buckles E.L."/>
            <person name="Liou S.-R."/>
            <person name="Boutin A."/>
            <person name="Hackett J."/>
            <person name="Stroud D."/>
            <person name="Mayhew G.F."/>
            <person name="Rose D.J."/>
            <person name="Zhou S."/>
            <person name="Schwartz D.C."/>
            <person name="Perna N.T."/>
            <person name="Mobley H.L.T."/>
            <person name="Donnenberg M.S."/>
            <person name="Blattner F.R."/>
        </authorList>
    </citation>
    <scope>NUCLEOTIDE SEQUENCE [LARGE SCALE GENOMIC DNA]</scope>
    <source>
        <strain>CFT073 / ATCC 700928 / UPEC</strain>
    </source>
</reference>
<name>PTFC_ECOL6</name>
<dbReference type="EMBL" id="AE014075">
    <property type="protein sequence ID" value="AAN81375.1"/>
    <property type="molecule type" value="Genomic_DNA"/>
</dbReference>
<dbReference type="RefSeq" id="WP_000985305.1">
    <property type="nucleotide sequence ID" value="NZ_CP051263.1"/>
</dbReference>
<dbReference type="STRING" id="199310.c2925"/>
<dbReference type="KEGG" id="ecc:c2925"/>
<dbReference type="eggNOG" id="COG1299">
    <property type="taxonomic scope" value="Bacteria"/>
</dbReference>
<dbReference type="HOGENOM" id="CLU_013155_0_2_6"/>
<dbReference type="BioCyc" id="ECOL199310:C2925-MONOMER"/>
<dbReference type="Proteomes" id="UP000001410">
    <property type="component" value="Chromosome"/>
</dbReference>
<dbReference type="GO" id="GO:0005886">
    <property type="term" value="C:plasma membrane"/>
    <property type="evidence" value="ECO:0007669"/>
    <property type="project" value="UniProtKB-SubCell"/>
</dbReference>
<dbReference type="GO" id="GO:0008982">
    <property type="term" value="F:protein-N(PI)-phosphohistidine-sugar phosphotransferase activity"/>
    <property type="evidence" value="ECO:0007669"/>
    <property type="project" value="InterPro"/>
</dbReference>
<dbReference type="GO" id="GO:0090563">
    <property type="term" value="F:protein-phosphocysteine-sugar phosphotransferase activity"/>
    <property type="evidence" value="ECO:0007669"/>
    <property type="project" value="TreeGrafter"/>
</dbReference>
<dbReference type="GO" id="GO:0009401">
    <property type="term" value="P:phosphoenolpyruvate-dependent sugar phosphotransferase system"/>
    <property type="evidence" value="ECO:0007669"/>
    <property type="project" value="UniProtKB-KW"/>
</dbReference>
<dbReference type="InterPro" id="IPR050864">
    <property type="entry name" value="Bacterial_PTS_Sugar_Transport"/>
</dbReference>
<dbReference type="InterPro" id="IPR003352">
    <property type="entry name" value="PTS_EIIC"/>
</dbReference>
<dbReference type="InterPro" id="IPR013014">
    <property type="entry name" value="PTS_EIIC_2"/>
</dbReference>
<dbReference type="PANTHER" id="PTHR30505">
    <property type="entry name" value="FRUCTOSE-LIKE PERMEASE"/>
    <property type="match status" value="1"/>
</dbReference>
<dbReference type="PANTHER" id="PTHR30505:SF0">
    <property type="entry name" value="FRUCTOSE-LIKE PTS SYSTEM EIIBC COMPONENT-RELATED"/>
    <property type="match status" value="1"/>
</dbReference>
<dbReference type="Pfam" id="PF02378">
    <property type="entry name" value="PTS_EIIC"/>
    <property type="match status" value="1"/>
</dbReference>
<dbReference type="PROSITE" id="PS51104">
    <property type="entry name" value="PTS_EIIC_TYPE_2"/>
    <property type="match status" value="1"/>
</dbReference>
<keyword id="KW-0997">Cell inner membrane</keyword>
<keyword id="KW-1003">Cell membrane</keyword>
<keyword id="KW-0472">Membrane</keyword>
<keyword id="KW-0597">Phosphoprotein</keyword>
<keyword id="KW-0598">Phosphotransferase system</keyword>
<keyword id="KW-1185">Reference proteome</keyword>
<keyword id="KW-0762">Sugar transport</keyword>
<keyword id="KW-0808">Transferase</keyword>
<keyword id="KW-0812">Transmembrane</keyword>
<keyword id="KW-1133">Transmembrane helix</keyword>
<keyword id="KW-0813">Transport</keyword>
<gene>
    <name type="primary">fryC</name>
    <name type="ordered locus">c2925</name>
</gene>